<gene>
    <name evidence="1" type="primary">rplQ</name>
    <name type="ordered locus">Bcav_3112</name>
</gene>
<protein>
    <recommendedName>
        <fullName evidence="1">Large ribosomal subunit protein bL17</fullName>
    </recommendedName>
    <alternativeName>
        <fullName evidence="3">50S ribosomal protein L17</fullName>
    </alternativeName>
</protein>
<name>RL17_BEUC1</name>
<evidence type="ECO:0000255" key="1">
    <source>
        <dbReference type="HAMAP-Rule" id="MF_01368"/>
    </source>
</evidence>
<evidence type="ECO:0000256" key="2">
    <source>
        <dbReference type="SAM" id="MobiDB-lite"/>
    </source>
</evidence>
<evidence type="ECO:0000305" key="3"/>
<keyword id="KW-1185">Reference proteome</keyword>
<keyword id="KW-0687">Ribonucleoprotein</keyword>
<keyword id="KW-0689">Ribosomal protein</keyword>
<organism>
    <name type="scientific">Beutenbergia cavernae (strain ATCC BAA-8 / DSM 12333 / CCUG 43141 / JCM 11478 / NBRC 16432 / NCIMB 13614 / HKI 0122)</name>
    <dbReference type="NCBI Taxonomy" id="471853"/>
    <lineage>
        <taxon>Bacteria</taxon>
        <taxon>Bacillati</taxon>
        <taxon>Actinomycetota</taxon>
        <taxon>Actinomycetes</taxon>
        <taxon>Micrococcales</taxon>
        <taxon>Beutenbergiaceae</taxon>
        <taxon>Beutenbergia</taxon>
    </lineage>
</organism>
<feature type="chain" id="PRO_1000214997" description="Large ribosomal subunit protein bL17">
    <location>
        <begin position="1"/>
        <end position="197"/>
    </location>
</feature>
<feature type="region of interest" description="Disordered" evidence="2">
    <location>
        <begin position="136"/>
        <end position="197"/>
    </location>
</feature>
<feature type="compositionally biased region" description="Acidic residues" evidence="2">
    <location>
        <begin position="148"/>
        <end position="187"/>
    </location>
</feature>
<feature type="compositionally biased region" description="Basic and acidic residues" evidence="2">
    <location>
        <begin position="188"/>
        <end position="197"/>
    </location>
</feature>
<accession>C5C0G0</accession>
<reference key="1">
    <citation type="journal article" date="2009" name="Stand. Genomic Sci.">
        <title>Complete genome sequence of Beutenbergia cavernae type strain (HKI 0122).</title>
        <authorList>
            <person name="Land M."/>
            <person name="Pukall R."/>
            <person name="Abt B."/>
            <person name="Goker M."/>
            <person name="Rohde M."/>
            <person name="Glavina Del Rio T."/>
            <person name="Tice H."/>
            <person name="Copeland A."/>
            <person name="Cheng J.F."/>
            <person name="Lucas S."/>
            <person name="Chen F."/>
            <person name="Nolan M."/>
            <person name="Bruce D."/>
            <person name="Goodwin L."/>
            <person name="Pitluck S."/>
            <person name="Ivanova N."/>
            <person name="Mavromatis K."/>
            <person name="Ovchinnikova G."/>
            <person name="Pati A."/>
            <person name="Chen A."/>
            <person name="Palaniappan K."/>
            <person name="Hauser L."/>
            <person name="Chang Y.J."/>
            <person name="Jefferies C.C."/>
            <person name="Saunders E."/>
            <person name="Brettin T."/>
            <person name="Detter J.C."/>
            <person name="Han C."/>
            <person name="Chain P."/>
            <person name="Bristow J."/>
            <person name="Eisen J.A."/>
            <person name="Markowitz V."/>
            <person name="Hugenholtz P."/>
            <person name="Kyrpides N.C."/>
            <person name="Klenk H.P."/>
            <person name="Lapidus A."/>
        </authorList>
    </citation>
    <scope>NUCLEOTIDE SEQUENCE [LARGE SCALE GENOMIC DNA]</scope>
    <source>
        <strain>ATCC BAA-8 / DSM 12333 / CCUG 43141 / JCM 11478 / NBRC 16432 / NCIMB 13614 / HKI 0122</strain>
    </source>
</reference>
<sequence>MPTPTKGPRLGGGPAHERLMLANLATALFEHERITTTEAKAKRLRPLAERLITFAKRGDLASRRRVLTVVKDKGVVHTLFTEIAPAMAERPGGYTRITKVGPRKGDNAPMAVIELVLEPLSPKQATVAEATAATKRAAKKADAPQEPVADEATDADESVEDEAPAQDDSADEVEAAADETPADDAEADAEKSSDTEK</sequence>
<comment type="subunit">
    <text evidence="1">Part of the 50S ribosomal subunit. Contacts protein L32.</text>
</comment>
<comment type="similarity">
    <text evidence="1">Belongs to the bacterial ribosomal protein bL17 family.</text>
</comment>
<dbReference type="EMBL" id="CP001618">
    <property type="protein sequence ID" value="ACQ81356.1"/>
    <property type="molecule type" value="Genomic_DNA"/>
</dbReference>
<dbReference type="RefSeq" id="WP_015883596.1">
    <property type="nucleotide sequence ID" value="NC_012669.1"/>
</dbReference>
<dbReference type="SMR" id="C5C0G0"/>
<dbReference type="STRING" id="471853.Bcav_3112"/>
<dbReference type="KEGG" id="bcv:Bcav_3112"/>
<dbReference type="eggNOG" id="COG0203">
    <property type="taxonomic scope" value="Bacteria"/>
</dbReference>
<dbReference type="HOGENOM" id="CLU_074407_0_0_11"/>
<dbReference type="OrthoDB" id="9809073at2"/>
<dbReference type="Proteomes" id="UP000007962">
    <property type="component" value="Chromosome"/>
</dbReference>
<dbReference type="GO" id="GO:0022625">
    <property type="term" value="C:cytosolic large ribosomal subunit"/>
    <property type="evidence" value="ECO:0007669"/>
    <property type="project" value="TreeGrafter"/>
</dbReference>
<dbReference type="GO" id="GO:0003735">
    <property type="term" value="F:structural constituent of ribosome"/>
    <property type="evidence" value="ECO:0007669"/>
    <property type="project" value="InterPro"/>
</dbReference>
<dbReference type="GO" id="GO:0006412">
    <property type="term" value="P:translation"/>
    <property type="evidence" value="ECO:0007669"/>
    <property type="project" value="UniProtKB-UniRule"/>
</dbReference>
<dbReference type="FunFam" id="3.90.1030.10:FF:000001">
    <property type="entry name" value="50S ribosomal protein L17"/>
    <property type="match status" value="1"/>
</dbReference>
<dbReference type="Gene3D" id="3.90.1030.10">
    <property type="entry name" value="Ribosomal protein L17"/>
    <property type="match status" value="1"/>
</dbReference>
<dbReference type="HAMAP" id="MF_01368">
    <property type="entry name" value="Ribosomal_bL17"/>
    <property type="match status" value="1"/>
</dbReference>
<dbReference type="InterPro" id="IPR000456">
    <property type="entry name" value="Ribosomal_bL17"/>
</dbReference>
<dbReference type="InterPro" id="IPR047859">
    <property type="entry name" value="Ribosomal_bL17_CS"/>
</dbReference>
<dbReference type="InterPro" id="IPR036373">
    <property type="entry name" value="Ribosomal_bL17_sf"/>
</dbReference>
<dbReference type="NCBIfam" id="TIGR00059">
    <property type="entry name" value="L17"/>
    <property type="match status" value="1"/>
</dbReference>
<dbReference type="PANTHER" id="PTHR14413:SF16">
    <property type="entry name" value="LARGE RIBOSOMAL SUBUNIT PROTEIN BL17M"/>
    <property type="match status" value="1"/>
</dbReference>
<dbReference type="PANTHER" id="PTHR14413">
    <property type="entry name" value="RIBOSOMAL PROTEIN L17"/>
    <property type="match status" value="1"/>
</dbReference>
<dbReference type="Pfam" id="PF01196">
    <property type="entry name" value="Ribosomal_L17"/>
    <property type="match status" value="1"/>
</dbReference>
<dbReference type="SUPFAM" id="SSF64263">
    <property type="entry name" value="Prokaryotic ribosomal protein L17"/>
    <property type="match status" value="1"/>
</dbReference>
<dbReference type="PROSITE" id="PS01167">
    <property type="entry name" value="RIBOSOMAL_L17"/>
    <property type="match status" value="1"/>
</dbReference>
<proteinExistence type="inferred from homology"/>